<reference key="1">
    <citation type="journal article" date="1988" name="Gene">
        <title>Nucleotide sequences of the Escherichia coli nagE and nagB genes: the structural genes for the N-acetylglucosamine transport protein of the bacterial phosphoenolpyruvate: sugar phosphotransferase system and for glucosamine-6-phosphate deaminase.</title>
        <authorList>
            <person name="Rogers M.J."/>
            <person name="Ohgi T."/>
            <person name="Plumbridge J."/>
            <person name="Soell D."/>
        </authorList>
    </citation>
    <scope>NUCLEOTIDE SEQUENCE [GENOMIC DNA]</scope>
</reference>
<reference key="2">
    <citation type="journal article" date="1990" name="Biochem. Cell Biol.">
        <title>Cloning and characterization of the N-acetylglucosamine operon of Escherichia coli.</title>
        <authorList>
            <person name="Peri K.G."/>
            <person name="Goldie H."/>
            <person name="Waygood E.B."/>
        </authorList>
    </citation>
    <scope>NUCLEOTIDE SEQUENCE [GENOMIC DNA]</scope>
    <source>
        <strain>K12</strain>
    </source>
</reference>
<reference key="3">
    <citation type="journal article" date="1996" name="DNA Res.">
        <title>A 718-kb DNA sequence of the Escherichia coli K-12 genome corresponding to the 12.7-28.0 min region on the linkage map.</title>
        <authorList>
            <person name="Oshima T."/>
            <person name="Aiba H."/>
            <person name="Baba T."/>
            <person name="Fujita K."/>
            <person name="Hayashi K."/>
            <person name="Honjo A."/>
            <person name="Ikemoto K."/>
            <person name="Inada T."/>
            <person name="Itoh T."/>
            <person name="Kajihara M."/>
            <person name="Kanai K."/>
            <person name="Kashimoto K."/>
            <person name="Kimura S."/>
            <person name="Kitagawa M."/>
            <person name="Makino K."/>
            <person name="Masuda S."/>
            <person name="Miki T."/>
            <person name="Mizobuchi K."/>
            <person name="Mori H."/>
            <person name="Motomura K."/>
            <person name="Nakamura Y."/>
            <person name="Nashimoto H."/>
            <person name="Nishio Y."/>
            <person name="Saito N."/>
            <person name="Sampei G."/>
            <person name="Seki Y."/>
            <person name="Tagami H."/>
            <person name="Takemoto K."/>
            <person name="Wada C."/>
            <person name="Yamamoto Y."/>
            <person name="Yano M."/>
            <person name="Horiuchi T."/>
        </authorList>
    </citation>
    <scope>NUCLEOTIDE SEQUENCE [LARGE SCALE GENOMIC DNA]</scope>
    <source>
        <strain>K12 / W3110 / ATCC 27325 / DSM 5911</strain>
    </source>
</reference>
<reference key="4">
    <citation type="journal article" date="1997" name="Science">
        <title>The complete genome sequence of Escherichia coli K-12.</title>
        <authorList>
            <person name="Blattner F.R."/>
            <person name="Plunkett G. III"/>
            <person name="Bloch C.A."/>
            <person name="Perna N.T."/>
            <person name="Burland V."/>
            <person name="Riley M."/>
            <person name="Collado-Vides J."/>
            <person name="Glasner J.D."/>
            <person name="Rode C.K."/>
            <person name="Mayhew G.F."/>
            <person name="Gregor J."/>
            <person name="Davis N.W."/>
            <person name="Kirkpatrick H.A."/>
            <person name="Goeden M.A."/>
            <person name="Rose D.J."/>
            <person name="Mau B."/>
            <person name="Shao Y."/>
        </authorList>
    </citation>
    <scope>NUCLEOTIDE SEQUENCE [LARGE SCALE GENOMIC DNA]</scope>
    <source>
        <strain>K12 / MG1655 / ATCC 47076</strain>
    </source>
</reference>
<reference key="5">
    <citation type="journal article" date="2006" name="Mol. Syst. Biol.">
        <title>Highly accurate genome sequences of Escherichia coli K-12 strains MG1655 and W3110.</title>
        <authorList>
            <person name="Hayashi K."/>
            <person name="Morooka N."/>
            <person name="Yamamoto Y."/>
            <person name="Fujita K."/>
            <person name="Isono K."/>
            <person name="Choi S."/>
            <person name="Ohtsubo E."/>
            <person name="Baba T."/>
            <person name="Wanner B.L."/>
            <person name="Mori H."/>
            <person name="Horiuchi T."/>
        </authorList>
    </citation>
    <scope>NUCLEOTIDE SEQUENCE [LARGE SCALE GENOMIC DNA]</scope>
    <source>
        <strain>K12 / W3110 / ATCC 27325 / DSM 5911</strain>
    </source>
</reference>
<reference key="6">
    <citation type="journal article" date="1987" name="Arch. Biochem. Biophys.">
        <title>Sulfhydryl groups of glucosamine-6-phosphate isomerase deaminase from Escherichia coli.</title>
        <authorList>
            <person name="Altamirano M.M."/>
            <person name="Mulliert G."/>
            <person name="Calcagno M."/>
        </authorList>
    </citation>
    <scope>CATALYTIC ACTIVITY</scope>
    <scope>BIOPHYSICOCHEMICAL PROPERTIES</scope>
    <scope>FUNCTION</scope>
</reference>
<reference key="7">
    <citation type="journal article" date="1992" name="Biochemistry">
        <title>Identification of two cysteine residues forming a pair of vicinal thiols in glucosamine-6-phosphate deaminase from Escherichia coli and a study of their functional role by site-directed mutagenesis.</title>
        <authorList>
            <person name="Altamirano M.M."/>
            <person name="Plumbridge J.A."/>
            <person name="Calcagno M.L."/>
        </authorList>
    </citation>
    <scope>MUTAGENESIS OF CYS-118 AND CYS-239</scope>
    <scope>CATALYTIC ACTIVITY</scope>
    <scope>FUNCTION</scope>
</reference>
<reference key="8">
    <citation type="journal article" date="1993" name="Biochem. J.">
        <title>Glucosamine-6-phosphate deaminase from Escherichia coli has a trimer of dimers structure with three intersubunit disulphides.</title>
        <authorList>
            <person name="Altamirano M.M."/>
            <person name="Plumbridge J.A."/>
            <person name="Barba H.A."/>
            <person name="Calcagno M.L."/>
        </authorList>
    </citation>
    <scope>DISULFIDE BONDS</scope>
</reference>
<reference key="9">
    <citation type="journal article" date="2001" name="Biochemistry">
        <title>On the multiple functional roles of the active site histidine in catalysis and allosteric regulation of Escherichia coli glucosamine 6-phosphate deaminase.</title>
        <authorList>
            <person name="Montero-Moran G.M."/>
            <person name="Lara-Gonzalez S."/>
            <person name="Alvarez-Anorve L.I."/>
            <person name="Plumbridge J.A."/>
            <person name="Calcagno M.L."/>
        </authorList>
    </citation>
    <scope>ACTIVE SITES</scope>
    <scope>MUTAGENESIS OF ASP-141; HIS-143 AND GLU-148</scope>
</reference>
<reference key="10">
    <citation type="journal article" date="1995" name="Structure">
        <title>Structure and catalytic mechanism of glucosamine 6-phosphate deaminase from Escherichia coli at 2.1-A resolution.</title>
        <authorList>
            <person name="Oliva G."/>
            <person name="Fontes M.R.M."/>
            <person name="Garratt R.C."/>
            <person name="Altamirano M.M."/>
            <person name="Calcagno M.L."/>
            <person name="Horjales E."/>
        </authorList>
    </citation>
    <scope>X-RAY CRYSTALLOGRAPHY (2.1 ANGSTROMS) OF NATIVE PROTEIN AND COMPLEX WITH THE INHIBITOR 2-AMINO-2-DEOXY-D-GLUCITOL-6-PHOSPHATE</scope>
</reference>
<reference key="11">
    <citation type="journal article" date="1999" name="Structure">
        <title>The allosteric transition of glucosamine-6-phosphate deaminase: the structure of the T state at 2.3-A resolution.</title>
        <authorList>
            <person name="Horjales E."/>
            <person name="Altamirano M.M."/>
            <person name="Calcagno M.L."/>
            <person name="Garratt R.C."/>
            <person name="Oliva G."/>
        </authorList>
    </citation>
    <scope>X-RAY CRYSTALLOGRAPHY (2.3 ANGSTROMS)</scope>
</reference>
<reference key="12">
    <citation type="journal article" date="2002" name="Acta Crystallogr. D">
        <title>Structural flexibility, an essential component of the allosteric activation in Escherichia coli glucosamine-6-phosphate deaminase.</title>
        <authorList>
            <person name="Rudino-Pinera E."/>
            <person name="Morales-Arrieta S."/>
            <person name="Rojas-Trejo S.P."/>
            <person name="Horjales E."/>
        </authorList>
    </citation>
    <scope>X-RAY CRYSTALLOGRAPHY (1.9 ANGSTROMS) OF NATIVE PROTEIN AND COMPLEXES WITH FRUCTOSE-6-PHOSPHATE AND N-ACETYLGLUCOSAMINE-6-PHOSPHATE</scope>
</reference>
<reference key="13">
    <citation type="journal article" date="2002" name="J. Mol. Biol.">
        <title>On the role of the conformational flexibility of the active-site lid on the allosteric kinetics of glucosamine-6-phosphate deaminase.</title>
        <authorList>
            <person name="Bustos-Jaimes I."/>
            <person name="Sosa-Peinado A."/>
            <person name="Rudino-Pinera E."/>
            <person name="Horjales E."/>
            <person name="Calcagno M.L."/>
        </authorList>
    </citation>
    <scope>X-RAY CRYSTALLOGRAPHY (2.02 ANGSTROMS) OF MUTANT ALA-174</scope>
</reference>
<sequence length="266" mass="29774">MRLIPLTTAEQVGKWAARHIVNRINAFKPTADRPFVLGLPTGGTPMTTYKALVEMHKAGQVSFKHVVTFNMDEYVGLPKEHPESYYSFMHRNFFDHVDIPAENINLLNGNAPDIDAECRQYEEKIRSYGKIHLFMGGVGNDGHIAFNEPASSLASRTRIKTLTHDTRVANSRFFDNDVNQVPKYALTVGVGTLLDAEEVMILVLGSQKALALQAAVEGCVNHMWTISCLQLHPKAIMVCDEPSTMELKVKTLRYFNELEAENIKGL</sequence>
<comment type="function">
    <text evidence="2 3">Catalyzes the reversible isomerization-deamination of glucosamine 6-phosphate (GlcN6P) to form fructose 6-phosphate (Fru6P) and ammonium ion.</text>
</comment>
<comment type="catalytic activity">
    <reaction evidence="2 3">
        <text>alpha-D-glucosamine 6-phosphate + H2O = beta-D-fructose 6-phosphate + NH4(+)</text>
        <dbReference type="Rhea" id="RHEA:12172"/>
        <dbReference type="ChEBI" id="CHEBI:15377"/>
        <dbReference type="ChEBI" id="CHEBI:28938"/>
        <dbReference type="ChEBI" id="CHEBI:57634"/>
        <dbReference type="ChEBI" id="CHEBI:75989"/>
        <dbReference type="EC" id="3.5.99.6"/>
    </reaction>
</comment>
<comment type="activity regulation">
    <text>Allosterically activated by N-acetylglucosamine 6-phosphate (GlcNAc6P). Competitively inhibited by 2-amino-2-deoxy-D-glucitol-6-phosphate (GlcN-ol-6P).</text>
</comment>
<comment type="biophysicochemical properties">
    <kinetics>
        <KM evidence="3">0.5 mM for GlcN6P</KM>
    </kinetics>
</comment>
<comment type="pathway">
    <text>Amino-sugar metabolism; N-acetylneuraminate degradation; D-fructose 6-phosphate from N-acetylneuraminate: step 5/5.</text>
</comment>
<comment type="subunit">
    <text evidence="4">Homohexamer; trimer of disulfide-linked dimers.</text>
</comment>
<comment type="miscellaneous">
    <text>Disulfide bonds seem not to be essential for the stability of the oligomer under physiological conditions.</text>
</comment>
<comment type="similarity">
    <text evidence="5">Belongs to the glucosamine/galactosamine-6-phosphate isomerase family. NagB subfamily.</text>
</comment>
<keyword id="KW-0002">3D-structure</keyword>
<keyword id="KW-0021">Allosteric enzyme</keyword>
<keyword id="KW-0119">Carbohydrate metabolism</keyword>
<keyword id="KW-1015">Disulfide bond</keyword>
<keyword id="KW-0378">Hydrolase</keyword>
<keyword id="KW-1185">Reference proteome</keyword>
<gene>
    <name type="primary">nagB</name>
    <name type="synonym">glmD</name>
    <name type="ordered locus">b0678</name>
    <name type="ordered locus">JW0664</name>
</gene>
<name>NAGB_ECOLI</name>
<proteinExistence type="evidence at protein level"/>
<organism>
    <name type="scientific">Escherichia coli (strain K12)</name>
    <dbReference type="NCBI Taxonomy" id="83333"/>
    <lineage>
        <taxon>Bacteria</taxon>
        <taxon>Pseudomonadati</taxon>
        <taxon>Pseudomonadota</taxon>
        <taxon>Gammaproteobacteria</taxon>
        <taxon>Enterobacterales</taxon>
        <taxon>Enterobacteriaceae</taxon>
        <taxon>Escherichia</taxon>
    </lineage>
</organism>
<protein>
    <recommendedName>
        <fullName>Glucosamine-6-phosphate deaminase</fullName>
        <ecNumber evidence="2">3.5.99.6</ecNumber>
    </recommendedName>
    <alternativeName>
        <fullName>GlcN6P deaminase</fullName>
        <shortName>GNPDA</shortName>
    </alternativeName>
    <alternativeName>
        <fullName>Glucosamine-6-phosphate isomerase</fullName>
    </alternativeName>
</protein>
<accession>P0A759</accession>
<accession>O68603</accession>
<accession>P09375</accession>
<evidence type="ECO:0000269" key="1">
    <source>
    </source>
</evidence>
<evidence type="ECO:0000269" key="2">
    <source>
    </source>
</evidence>
<evidence type="ECO:0000269" key="3">
    <source>
    </source>
</evidence>
<evidence type="ECO:0000269" key="4">
    <source>
    </source>
</evidence>
<evidence type="ECO:0000305" key="5"/>
<evidence type="ECO:0007829" key="6">
    <source>
        <dbReference type="PDB" id="1FS5"/>
    </source>
</evidence>
<feature type="chain" id="PRO_0000160143" description="Glucosamine-6-phosphate deaminase">
    <location>
        <begin position="1"/>
        <end position="266"/>
    </location>
</feature>
<feature type="active site" description="Proton acceptor; for enolization step" evidence="1">
    <location>
        <position position="72"/>
    </location>
</feature>
<feature type="active site" description="For ring-opening step" evidence="1">
    <location>
        <position position="141"/>
    </location>
</feature>
<feature type="active site" description="Proton acceptor; for ring-opening step" evidence="1">
    <location>
        <position position="143"/>
    </location>
</feature>
<feature type="active site" description="For ring-opening step" evidence="1">
    <location>
        <position position="148"/>
    </location>
</feature>
<feature type="site" description="Part of the allosteric site">
    <location>
        <position position="151"/>
    </location>
</feature>
<feature type="site" description="Part of the allosteric site">
    <location>
        <position position="158"/>
    </location>
</feature>
<feature type="site" description="Part of the allosteric site">
    <location>
        <position position="160"/>
    </location>
</feature>
<feature type="site" description="Part of the allosteric site">
    <location>
        <position position="161"/>
    </location>
</feature>
<feature type="site" description="Part of the allosteric site">
    <location>
        <position position="254"/>
    </location>
</feature>
<feature type="disulfide bond" description="Interchain" evidence="4">
    <location>
        <position position="219"/>
    </location>
</feature>
<feature type="mutagenesis site" description="50% of wild-type activity, but 2-fold decrease in substrate affinity." evidence="2">
    <original>C</original>
    <variation>S</variation>
    <location>
        <position position="118"/>
    </location>
</feature>
<feature type="mutagenesis site" description="Large decrease in activity." evidence="1">
    <original>D</original>
    <variation>N</variation>
    <location>
        <position position="141"/>
    </location>
</feature>
<feature type="mutagenesis site" description="Loss of activity for the deamination reaction but not for the reverse reaction; complete loss of the homotropic cooperativity." evidence="1">
    <original>H</original>
    <variation>Q</variation>
    <location>
        <position position="143"/>
    </location>
</feature>
<feature type="mutagenesis site" description="Large decrease in activity." evidence="1">
    <original>E</original>
    <variation>Q</variation>
    <location>
        <position position="148"/>
    </location>
</feature>
<feature type="mutagenesis site" description="Loss of activity in the absence of the allosteric activator.">
    <original>F</original>
    <variation>A</variation>
    <location>
        <position position="174"/>
    </location>
</feature>
<feature type="mutagenesis site" description="50% of wild-type activity, but 2-fold decrease in substrate affinity; decrease in allosteric interaction energy." evidence="2">
    <original>C</original>
    <variation>S</variation>
    <location>
        <position position="239"/>
    </location>
</feature>
<feature type="sequence conflict" description="In Ref. 2; AAC09324." evidence="5" ref="2">
    <original>N</original>
    <variation>NM</variation>
    <location>
        <position position="70"/>
    </location>
</feature>
<feature type="sequence conflict" description="In Ref. 2; AAC09324." evidence="5" ref="2">
    <location>
        <position position="91"/>
    </location>
</feature>
<feature type="strand" evidence="6">
    <location>
        <begin position="2"/>
        <end position="5"/>
    </location>
</feature>
<feature type="helix" evidence="6">
    <location>
        <begin position="9"/>
        <end position="27"/>
    </location>
</feature>
<feature type="strand" evidence="6">
    <location>
        <begin position="31"/>
        <end position="33"/>
    </location>
</feature>
<feature type="strand" evidence="6">
    <location>
        <begin position="35"/>
        <end position="39"/>
    </location>
</feature>
<feature type="helix" evidence="6">
    <location>
        <begin position="46"/>
        <end position="57"/>
    </location>
</feature>
<feature type="strand" evidence="6">
    <location>
        <begin position="66"/>
        <end position="76"/>
    </location>
</feature>
<feature type="helix" evidence="6">
    <location>
        <begin position="85"/>
        <end position="92"/>
    </location>
</feature>
<feature type="helix" evidence="6">
    <location>
        <begin position="94"/>
        <end position="96"/>
    </location>
</feature>
<feature type="helix" evidence="6">
    <location>
        <begin position="101"/>
        <end position="103"/>
    </location>
</feature>
<feature type="helix" evidence="6">
    <location>
        <begin position="114"/>
        <end position="128"/>
    </location>
</feature>
<feature type="strand" evidence="6">
    <location>
        <begin position="132"/>
        <end position="136"/>
    </location>
</feature>
<feature type="strand" evidence="6">
    <location>
        <begin position="157"/>
        <end position="161"/>
    </location>
</feature>
<feature type="helix" evidence="6">
    <location>
        <begin position="164"/>
        <end position="170"/>
    </location>
</feature>
<feature type="helix" evidence="6">
    <location>
        <begin position="171"/>
        <end position="173"/>
    </location>
</feature>
<feature type="turn" evidence="6">
    <location>
        <begin position="174"/>
        <end position="176"/>
    </location>
</feature>
<feature type="helix" evidence="6">
    <location>
        <begin position="178"/>
        <end position="180"/>
    </location>
</feature>
<feature type="strand" evidence="6">
    <location>
        <begin position="183"/>
        <end position="187"/>
    </location>
</feature>
<feature type="helix" evidence="6">
    <location>
        <begin position="190"/>
        <end position="194"/>
    </location>
</feature>
<feature type="strand" evidence="6">
    <location>
        <begin position="199"/>
        <end position="203"/>
    </location>
</feature>
<feature type="helix" evidence="6">
    <location>
        <begin position="206"/>
        <end position="208"/>
    </location>
</feature>
<feature type="helix" evidence="6">
    <location>
        <begin position="209"/>
        <end position="217"/>
    </location>
</feature>
<feature type="strand" evidence="6">
    <location>
        <begin position="222"/>
        <end position="224"/>
    </location>
</feature>
<feature type="helix" evidence="6">
    <location>
        <begin position="225"/>
        <end position="231"/>
    </location>
</feature>
<feature type="strand" evidence="6">
    <location>
        <begin position="233"/>
        <end position="239"/>
    </location>
</feature>
<feature type="helix" evidence="6">
    <location>
        <begin position="242"/>
        <end position="244"/>
    </location>
</feature>
<feature type="helix" evidence="6">
    <location>
        <begin position="249"/>
        <end position="263"/>
    </location>
</feature>
<dbReference type="EC" id="3.5.99.6" evidence="2"/>
<dbReference type="EMBL" id="M19284">
    <property type="protein sequence ID" value="AAA24191.1"/>
    <property type="molecule type" value="Genomic_DNA"/>
</dbReference>
<dbReference type="EMBL" id="AF052007">
    <property type="protein sequence ID" value="AAC09324.1"/>
    <property type="molecule type" value="Genomic_DNA"/>
</dbReference>
<dbReference type="EMBL" id="U00096">
    <property type="protein sequence ID" value="AAC73772.1"/>
    <property type="molecule type" value="Genomic_DNA"/>
</dbReference>
<dbReference type="EMBL" id="AP009048">
    <property type="protein sequence ID" value="BAA35321.1"/>
    <property type="molecule type" value="Genomic_DNA"/>
</dbReference>
<dbReference type="PIR" id="A29895">
    <property type="entry name" value="MUECNG"/>
</dbReference>
<dbReference type="RefSeq" id="NP_415204.1">
    <property type="nucleotide sequence ID" value="NC_000913.3"/>
</dbReference>
<dbReference type="RefSeq" id="WP_001237072.1">
    <property type="nucleotide sequence ID" value="NZ_STEB01000044.1"/>
</dbReference>
<dbReference type="PDB" id="1CD5">
    <property type="method" value="X-ray"/>
    <property type="resolution" value="2.30 A"/>
    <property type="chains" value="A=1-266"/>
</dbReference>
<dbReference type="PDB" id="1DEA">
    <property type="method" value="X-ray"/>
    <property type="resolution" value="2.10 A"/>
    <property type="chains" value="A/B=1-266"/>
</dbReference>
<dbReference type="PDB" id="1FQO">
    <property type="method" value="X-ray"/>
    <property type="resolution" value="2.20 A"/>
    <property type="chains" value="A/B=1-266"/>
</dbReference>
<dbReference type="PDB" id="1FRZ">
    <property type="method" value="X-ray"/>
    <property type="resolution" value="2.20 A"/>
    <property type="chains" value="A/B=1-266"/>
</dbReference>
<dbReference type="PDB" id="1FS5">
    <property type="method" value="X-ray"/>
    <property type="resolution" value="1.73 A"/>
    <property type="chains" value="A/B=1-266"/>
</dbReference>
<dbReference type="PDB" id="1FS6">
    <property type="method" value="X-ray"/>
    <property type="resolution" value="2.20 A"/>
    <property type="chains" value="A=1-266"/>
</dbReference>
<dbReference type="PDB" id="1FSF">
    <property type="method" value="X-ray"/>
    <property type="resolution" value="1.90 A"/>
    <property type="chains" value="A=1-266"/>
</dbReference>
<dbReference type="PDB" id="1HOR">
    <property type="method" value="X-ray"/>
    <property type="resolution" value="2.40 A"/>
    <property type="chains" value="A/B=1-266"/>
</dbReference>
<dbReference type="PDB" id="1HOT">
    <property type="method" value="X-ray"/>
    <property type="resolution" value="2.40 A"/>
    <property type="chains" value="A/B=1-266"/>
</dbReference>
<dbReference type="PDB" id="1JT9">
    <property type="method" value="X-ray"/>
    <property type="resolution" value="2.06 A"/>
    <property type="chains" value="A=1-266"/>
</dbReference>
<dbReference type="PDB" id="2WU1">
    <property type="method" value="X-ray"/>
    <property type="resolution" value="2.20 A"/>
    <property type="chains" value="A/B=1-266"/>
</dbReference>
<dbReference type="PDBsum" id="1CD5"/>
<dbReference type="PDBsum" id="1DEA"/>
<dbReference type="PDBsum" id="1FQO"/>
<dbReference type="PDBsum" id="1FRZ"/>
<dbReference type="PDBsum" id="1FS5"/>
<dbReference type="PDBsum" id="1FS6"/>
<dbReference type="PDBsum" id="1FSF"/>
<dbReference type="PDBsum" id="1HOR"/>
<dbReference type="PDBsum" id="1HOT"/>
<dbReference type="PDBsum" id="1JT9"/>
<dbReference type="PDBsum" id="2WU1"/>
<dbReference type="SMR" id="P0A759"/>
<dbReference type="BioGRID" id="4261792">
    <property type="interactions" value="44"/>
</dbReference>
<dbReference type="DIP" id="DIP-35992N"/>
<dbReference type="FunCoup" id="P0A759">
    <property type="interactions" value="599"/>
</dbReference>
<dbReference type="IntAct" id="P0A759">
    <property type="interactions" value="11"/>
</dbReference>
<dbReference type="STRING" id="511145.b0678"/>
<dbReference type="DrugBank" id="DB02445">
    <property type="generic name" value="2-Deoxy-2-Amino Glucitol-6-Phosphate"/>
</dbReference>
<dbReference type="DrugBank" id="DB03951">
    <property type="generic name" value="N-acetyl-D-glucosamine-6-phosphate"/>
</dbReference>
<dbReference type="jPOST" id="P0A759"/>
<dbReference type="PaxDb" id="511145-b0678"/>
<dbReference type="EnsemblBacteria" id="AAC73772">
    <property type="protein sequence ID" value="AAC73772"/>
    <property type="gene ID" value="b0678"/>
</dbReference>
<dbReference type="GeneID" id="93776807"/>
<dbReference type="GeneID" id="945290"/>
<dbReference type="KEGG" id="ecj:JW0664"/>
<dbReference type="KEGG" id="eco:b0678"/>
<dbReference type="KEGG" id="ecoc:C3026_03370"/>
<dbReference type="PATRIC" id="fig|1411691.4.peg.1600"/>
<dbReference type="EchoBASE" id="EB0627"/>
<dbReference type="eggNOG" id="COG0363">
    <property type="taxonomic scope" value="Bacteria"/>
</dbReference>
<dbReference type="HOGENOM" id="CLU_049611_0_1_6"/>
<dbReference type="InParanoid" id="P0A759"/>
<dbReference type="OMA" id="HVITQGI"/>
<dbReference type="OrthoDB" id="9791139at2"/>
<dbReference type="PhylomeDB" id="P0A759"/>
<dbReference type="BioCyc" id="EcoCyc:GLUCOSAMINE-6-P-DEAMIN-MONOMER"/>
<dbReference type="BioCyc" id="MetaCyc:GLUCOSAMINE-6-P-DEAMIN-MONOMER"/>
<dbReference type="BRENDA" id="3.5.99.6">
    <property type="organism ID" value="2026"/>
</dbReference>
<dbReference type="SABIO-RK" id="P0A759"/>
<dbReference type="UniPathway" id="UPA00629">
    <property type="reaction ID" value="UER00684"/>
</dbReference>
<dbReference type="EvolutionaryTrace" id="P0A759"/>
<dbReference type="PRO" id="PR:P0A759"/>
<dbReference type="Proteomes" id="UP000000625">
    <property type="component" value="Chromosome"/>
</dbReference>
<dbReference type="GO" id="GO:0005737">
    <property type="term" value="C:cytoplasm"/>
    <property type="evidence" value="ECO:0000318"/>
    <property type="project" value="GO_Central"/>
</dbReference>
<dbReference type="GO" id="GO:0005829">
    <property type="term" value="C:cytosol"/>
    <property type="evidence" value="ECO:0000314"/>
    <property type="project" value="EcoCyc"/>
</dbReference>
<dbReference type="GO" id="GO:0004342">
    <property type="term" value="F:glucosamine-6-phosphate deaminase activity"/>
    <property type="evidence" value="ECO:0000314"/>
    <property type="project" value="EcoCyc"/>
</dbReference>
<dbReference type="GO" id="GO:0042802">
    <property type="term" value="F:identical protein binding"/>
    <property type="evidence" value="ECO:0000314"/>
    <property type="project" value="EcoCyc"/>
</dbReference>
<dbReference type="GO" id="GO:0005975">
    <property type="term" value="P:carbohydrate metabolic process"/>
    <property type="evidence" value="ECO:0007669"/>
    <property type="project" value="InterPro"/>
</dbReference>
<dbReference type="GO" id="GO:0006043">
    <property type="term" value="P:glucosamine catabolic process"/>
    <property type="evidence" value="ECO:0000318"/>
    <property type="project" value="GO_Central"/>
</dbReference>
<dbReference type="GO" id="GO:0006046">
    <property type="term" value="P:N-acetylglucosamine catabolic process"/>
    <property type="evidence" value="ECO:0000315"/>
    <property type="project" value="EcoCyc"/>
</dbReference>
<dbReference type="GO" id="GO:0019262">
    <property type="term" value="P:N-acetylneuraminate catabolic process"/>
    <property type="evidence" value="ECO:0000315"/>
    <property type="project" value="EcoCyc"/>
</dbReference>
<dbReference type="GO" id="GO:0006048">
    <property type="term" value="P:UDP-N-acetylglucosamine biosynthetic process"/>
    <property type="evidence" value="ECO:0000316"/>
    <property type="project" value="EcoCyc"/>
</dbReference>
<dbReference type="CDD" id="cd01399">
    <property type="entry name" value="GlcN6P_deaminase"/>
    <property type="match status" value="1"/>
</dbReference>
<dbReference type="FunFam" id="3.40.50.1360:FF:000002">
    <property type="entry name" value="Glucosamine-6-phosphate deaminase"/>
    <property type="match status" value="1"/>
</dbReference>
<dbReference type="Gene3D" id="3.40.50.1360">
    <property type="match status" value="1"/>
</dbReference>
<dbReference type="HAMAP" id="MF_01241">
    <property type="entry name" value="GlcN6P_deamin"/>
    <property type="match status" value="1"/>
</dbReference>
<dbReference type="InterPro" id="IPR006148">
    <property type="entry name" value="Glc/Gal-6P_isomerase"/>
</dbReference>
<dbReference type="InterPro" id="IPR004547">
    <property type="entry name" value="Glucosamine6P_isomerase"/>
</dbReference>
<dbReference type="InterPro" id="IPR018321">
    <property type="entry name" value="Glucosamine6P_isomerase_CS"/>
</dbReference>
<dbReference type="InterPro" id="IPR037171">
    <property type="entry name" value="NagB/RpiA_transferase-like"/>
</dbReference>
<dbReference type="NCBIfam" id="TIGR00502">
    <property type="entry name" value="nagB"/>
    <property type="match status" value="1"/>
</dbReference>
<dbReference type="NCBIfam" id="NF001685">
    <property type="entry name" value="PRK00443.1-5"/>
    <property type="match status" value="1"/>
</dbReference>
<dbReference type="PANTHER" id="PTHR11280">
    <property type="entry name" value="GLUCOSAMINE-6-PHOSPHATE ISOMERASE"/>
    <property type="match status" value="1"/>
</dbReference>
<dbReference type="PANTHER" id="PTHR11280:SF5">
    <property type="entry name" value="GLUCOSAMINE-6-PHOSPHATE ISOMERASE"/>
    <property type="match status" value="1"/>
</dbReference>
<dbReference type="Pfam" id="PF01182">
    <property type="entry name" value="Glucosamine_iso"/>
    <property type="match status" value="1"/>
</dbReference>
<dbReference type="SUPFAM" id="SSF100950">
    <property type="entry name" value="NagB/RpiA/CoA transferase-like"/>
    <property type="match status" value="1"/>
</dbReference>
<dbReference type="PROSITE" id="PS01161">
    <property type="entry name" value="GLC_GALNAC_ISOMERASE"/>
    <property type="match status" value="1"/>
</dbReference>